<dbReference type="EC" id="2.7.7.38" evidence="1"/>
<dbReference type="EMBL" id="AM884177">
    <property type="protein sequence ID" value="CAP06827.1"/>
    <property type="molecule type" value="Genomic_DNA"/>
</dbReference>
<dbReference type="RefSeq" id="WP_009873621.1">
    <property type="nucleotide sequence ID" value="NC_010280.2"/>
</dbReference>
<dbReference type="SMR" id="B0BBG2"/>
<dbReference type="KEGG" id="ctl:CTLon_0429"/>
<dbReference type="HOGENOM" id="CLU_065038_0_1_0"/>
<dbReference type="UniPathway" id="UPA00030"/>
<dbReference type="UniPathway" id="UPA00358">
    <property type="reaction ID" value="UER00476"/>
</dbReference>
<dbReference type="Proteomes" id="UP001154401">
    <property type="component" value="Chromosome"/>
</dbReference>
<dbReference type="GO" id="GO:0005829">
    <property type="term" value="C:cytosol"/>
    <property type="evidence" value="ECO:0007669"/>
    <property type="project" value="TreeGrafter"/>
</dbReference>
<dbReference type="GO" id="GO:0008690">
    <property type="term" value="F:3-deoxy-manno-octulosonate cytidylyltransferase activity"/>
    <property type="evidence" value="ECO:0007669"/>
    <property type="project" value="UniProtKB-UniRule"/>
</dbReference>
<dbReference type="GO" id="GO:0033468">
    <property type="term" value="P:CMP-keto-3-deoxy-D-manno-octulosonic acid biosynthetic process"/>
    <property type="evidence" value="ECO:0007669"/>
    <property type="project" value="UniProtKB-UniRule"/>
</dbReference>
<dbReference type="GO" id="GO:0009103">
    <property type="term" value="P:lipopolysaccharide biosynthetic process"/>
    <property type="evidence" value="ECO:0007669"/>
    <property type="project" value="UniProtKB-UniRule"/>
</dbReference>
<dbReference type="CDD" id="cd02517">
    <property type="entry name" value="CMP-KDO-Synthetase"/>
    <property type="match status" value="1"/>
</dbReference>
<dbReference type="FunFam" id="3.90.550.10:FF:000011">
    <property type="entry name" value="3-deoxy-manno-octulosonate cytidylyltransferase"/>
    <property type="match status" value="1"/>
</dbReference>
<dbReference type="Gene3D" id="3.90.550.10">
    <property type="entry name" value="Spore Coat Polysaccharide Biosynthesis Protein SpsA, Chain A"/>
    <property type="match status" value="1"/>
</dbReference>
<dbReference type="HAMAP" id="MF_00057">
    <property type="entry name" value="KdsB"/>
    <property type="match status" value="1"/>
</dbReference>
<dbReference type="InterPro" id="IPR003329">
    <property type="entry name" value="Cytidylyl_trans"/>
</dbReference>
<dbReference type="InterPro" id="IPR004528">
    <property type="entry name" value="KdsB"/>
</dbReference>
<dbReference type="InterPro" id="IPR029044">
    <property type="entry name" value="Nucleotide-diphossugar_trans"/>
</dbReference>
<dbReference type="NCBIfam" id="TIGR00466">
    <property type="entry name" value="kdsB"/>
    <property type="match status" value="1"/>
</dbReference>
<dbReference type="NCBIfam" id="NF003950">
    <property type="entry name" value="PRK05450.1-3"/>
    <property type="match status" value="1"/>
</dbReference>
<dbReference type="NCBIfam" id="NF003952">
    <property type="entry name" value="PRK05450.1-5"/>
    <property type="match status" value="1"/>
</dbReference>
<dbReference type="PANTHER" id="PTHR42866">
    <property type="entry name" value="3-DEOXY-MANNO-OCTULOSONATE CYTIDYLYLTRANSFERASE"/>
    <property type="match status" value="1"/>
</dbReference>
<dbReference type="PANTHER" id="PTHR42866:SF2">
    <property type="entry name" value="3-DEOXY-MANNO-OCTULOSONATE CYTIDYLYLTRANSFERASE, MITOCHONDRIAL"/>
    <property type="match status" value="1"/>
</dbReference>
<dbReference type="Pfam" id="PF02348">
    <property type="entry name" value="CTP_transf_3"/>
    <property type="match status" value="1"/>
</dbReference>
<dbReference type="SUPFAM" id="SSF53448">
    <property type="entry name" value="Nucleotide-diphospho-sugar transferases"/>
    <property type="match status" value="1"/>
</dbReference>
<organism>
    <name type="scientific">Chlamydia trachomatis serovar L2b (strain UCH-1/proctitis)</name>
    <dbReference type="NCBI Taxonomy" id="471473"/>
    <lineage>
        <taxon>Bacteria</taxon>
        <taxon>Pseudomonadati</taxon>
        <taxon>Chlamydiota</taxon>
        <taxon>Chlamydiia</taxon>
        <taxon>Chlamydiales</taxon>
        <taxon>Chlamydiaceae</taxon>
        <taxon>Chlamydia/Chlamydophila group</taxon>
        <taxon>Chlamydia</taxon>
    </lineage>
</organism>
<comment type="function">
    <text evidence="1">Activates KDO (a required 8-carbon sugar) for incorporation into bacterial lipopolysaccharide in Gram-negative bacteria.</text>
</comment>
<comment type="catalytic activity">
    <reaction evidence="1">
        <text>3-deoxy-alpha-D-manno-oct-2-ulosonate + CTP = CMP-3-deoxy-beta-D-manno-octulosonate + diphosphate</text>
        <dbReference type="Rhea" id="RHEA:23448"/>
        <dbReference type="ChEBI" id="CHEBI:33019"/>
        <dbReference type="ChEBI" id="CHEBI:37563"/>
        <dbReference type="ChEBI" id="CHEBI:85986"/>
        <dbReference type="ChEBI" id="CHEBI:85987"/>
        <dbReference type="EC" id="2.7.7.38"/>
    </reaction>
</comment>
<comment type="pathway">
    <text evidence="1">Nucleotide-sugar biosynthesis; CMP-3-deoxy-D-manno-octulosonate biosynthesis; CMP-3-deoxy-D-manno-octulosonate from 3-deoxy-D-manno-octulosonate and CTP: step 1/1.</text>
</comment>
<comment type="pathway">
    <text evidence="1">Bacterial outer membrane biogenesis; lipopolysaccharide biosynthesis.</text>
</comment>
<comment type="subcellular location">
    <subcellularLocation>
        <location evidence="1">Cytoplasm</location>
    </subcellularLocation>
</comment>
<comment type="similarity">
    <text evidence="1">Belongs to the KdsB family.</text>
</comment>
<name>KDSB_CHLTB</name>
<sequence length="254" mass="28009">MFAFLTSKKVGILPSRWGSSRFPGKPLAKILGKTLVQRSYENALSSQSLDCVVVATDDQRIFDHVVEFGGLCVMTSTSCANGTERVEEVVSRHFPQAEIVVNIQGDEPCLSPTVIDGLVSTLENNPAADMVTPVTETTDPEAILTDHKVKCVFDKNGKALYFSRSAIPHNFKHPTPIYLHIGVYAFRKAFLSEYVKIPPSSLSLAEDLEQLRVLETGRSIYVHVVQNATGPSVDYPEDITKVEQYLLCLSKASF</sequence>
<accession>B0BBG2</accession>
<feature type="chain" id="PRO_1000091865" description="3-deoxy-manno-octulosonate cytidylyltransferase">
    <location>
        <begin position="1"/>
        <end position="254"/>
    </location>
</feature>
<protein>
    <recommendedName>
        <fullName evidence="1">3-deoxy-manno-octulosonate cytidylyltransferase</fullName>
        <ecNumber evidence="1">2.7.7.38</ecNumber>
    </recommendedName>
    <alternativeName>
        <fullName evidence="1">CMP-2-keto-3-deoxyoctulosonic acid synthase</fullName>
        <shortName evidence="1">CKS</shortName>
        <shortName evidence="1">CMP-KDO synthase</shortName>
    </alternativeName>
</protein>
<evidence type="ECO:0000255" key="1">
    <source>
        <dbReference type="HAMAP-Rule" id="MF_00057"/>
    </source>
</evidence>
<reference key="1">
    <citation type="journal article" date="2008" name="Genome Res.">
        <title>Chlamydia trachomatis: genome sequence analysis of lymphogranuloma venereum isolates.</title>
        <authorList>
            <person name="Thomson N.R."/>
            <person name="Holden M.T.G."/>
            <person name="Carder C."/>
            <person name="Lennard N."/>
            <person name="Lockey S.J."/>
            <person name="Marsh P."/>
            <person name="Skipp P."/>
            <person name="O'Connor C.D."/>
            <person name="Goodhead I."/>
            <person name="Norbertzcak H."/>
            <person name="Harris B."/>
            <person name="Ormond D."/>
            <person name="Rance R."/>
            <person name="Quail M.A."/>
            <person name="Parkhill J."/>
            <person name="Stephens R.S."/>
            <person name="Clarke I.N."/>
        </authorList>
    </citation>
    <scope>NUCLEOTIDE SEQUENCE [LARGE SCALE GENOMIC DNA]</scope>
    <source>
        <strain>UCH-1/proctitis</strain>
    </source>
</reference>
<proteinExistence type="inferred from homology"/>
<gene>
    <name evidence="1" type="primary">kdsB</name>
    <name type="ordered locus">CTLon_0429</name>
</gene>
<keyword id="KW-0963">Cytoplasm</keyword>
<keyword id="KW-0448">Lipopolysaccharide biosynthesis</keyword>
<keyword id="KW-0548">Nucleotidyltransferase</keyword>
<keyword id="KW-0808">Transferase</keyword>